<evidence type="ECO:0000250" key="1">
    <source>
        <dbReference type="UniProtKB" id="Q9UH92"/>
    </source>
</evidence>
<evidence type="ECO:0000255" key="2">
    <source>
        <dbReference type="PROSITE-ProRule" id="PRU00981"/>
    </source>
</evidence>
<evidence type="ECO:0000256" key="3">
    <source>
        <dbReference type="SAM" id="MobiDB-lite"/>
    </source>
</evidence>
<evidence type="ECO:0000269" key="4">
    <source>
    </source>
</evidence>
<evidence type="ECO:0000269" key="5">
    <source>
    </source>
</evidence>
<evidence type="ECO:0000269" key="6">
    <source>
    </source>
</evidence>
<evidence type="ECO:0000269" key="7">
    <source>
    </source>
</evidence>
<evidence type="ECO:0000305" key="8"/>
<evidence type="ECO:0007744" key="9">
    <source>
    </source>
</evidence>
<evidence type="ECO:0007744" key="10">
    <source>
    </source>
</evidence>
<organism>
    <name type="scientific">Mus musculus</name>
    <name type="common">Mouse</name>
    <dbReference type="NCBI Taxonomy" id="10090"/>
    <lineage>
        <taxon>Eukaryota</taxon>
        <taxon>Metazoa</taxon>
        <taxon>Chordata</taxon>
        <taxon>Craniata</taxon>
        <taxon>Vertebrata</taxon>
        <taxon>Euteleostomi</taxon>
        <taxon>Mammalia</taxon>
        <taxon>Eutheria</taxon>
        <taxon>Euarchontoglires</taxon>
        <taxon>Glires</taxon>
        <taxon>Rodentia</taxon>
        <taxon>Myomorpha</taxon>
        <taxon>Muroidea</taxon>
        <taxon>Muridae</taxon>
        <taxon>Murinae</taxon>
        <taxon>Mus</taxon>
        <taxon>Mus</taxon>
    </lineage>
</organism>
<feature type="chain" id="PRO_0000127280" description="Max-like protein X">
    <location>
        <begin position="1"/>
        <end position="298"/>
    </location>
</feature>
<feature type="domain" description="bHLH" evidence="2">
    <location>
        <begin position="129"/>
        <end position="187"/>
    </location>
</feature>
<feature type="region of interest" description="Disordered" evidence="3">
    <location>
        <begin position="1"/>
        <end position="63"/>
    </location>
</feature>
<feature type="region of interest" description="Disordered" evidence="3">
    <location>
        <begin position="98"/>
        <end position="119"/>
    </location>
</feature>
<feature type="region of interest" description="Leucine-zipper">
    <location>
        <begin position="194"/>
        <end position="214"/>
    </location>
</feature>
<feature type="compositionally biased region" description="Basic residues" evidence="3">
    <location>
        <begin position="28"/>
        <end position="37"/>
    </location>
</feature>
<feature type="compositionally biased region" description="Polar residues" evidence="3">
    <location>
        <begin position="98"/>
        <end position="109"/>
    </location>
</feature>
<feature type="modified residue" description="Phosphoserine" evidence="1">
    <location>
        <position position="7"/>
    </location>
</feature>
<feature type="modified residue" description="Phosphoserine" evidence="9 10">
    <location>
        <position position="45"/>
    </location>
</feature>
<feature type="modified residue" description="Phosphoserine" evidence="9 10">
    <location>
        <position position="48"/>
    </location>
</feature>
<feature type="modified residue" description="Phosphoserine" evidence="1">
    <location>
        <position position="74"/>
    </location>
</feature>
<feature type="modified residue" description="Phosphoserine" evidence="1">
    <location>
        <position position="77"/>
    </location>
</feature>
<feature type="modified residue" description="Phosphoserine" evidence="1">
    <location>
        <position position="98"/>
    </location>
</feature>
<feature type="splice variant" id="VSP_002139" description="In isoform Alpha and isoform Beta." evidence="8">
    <location>
        <begin position="15"/>
        <end position="68"/>
    </location>
</feature>
<feature type="splice variant" id="VSP_002140" description="In isoform Alpha." evidence="8">
    <location>
        <begin position="81"/>
        <end position="110"/>
    </location>
</feature>
<comment type="function">
    <text evidence="4 5 6">Transcription regulator. Forms a sequence-specific DNA-binding protein complex with MAD1, MAD4, MNT, WBSCR14 and MLXIP which recognizes the core sequence 5'-CACGTG-3'. The TCFL4-MAD1, TCFL4-MAD4, TCFL4-WBSCR14 complexes are transcriptional repressors. Plays a role in transcriptional activation of glycolytic target genes. Involved in glucose-responsive gene regulation.</text>
</comment>
<comment type="subunit">
    <text>Efficient DNA binding requires dimerization with another bHLH protein. Binds DNA as a heterodimer with MAD1, MAD4, MNT, WBSCR14 and MLXIP. Can also bind DNA as a homodimer.</text>
</comment>
<comment type="subcellular location">
    <molecule>Isoform Alpha</molecule>
    <subcellularLocation>
        <location evidence="1">Cytoplasm</location>
    </subcellularLocation>
    <text evidence="1">Found predominantly in the cytoplasm.</text>
</comment>
<comment type="subcellular location">
    <molecule>Isoform Beta</molecule>
    <subcellularLocation>
        <location evidence="1">Cytoplasm</location>
    </subcellularLocation>
    <text evidence="1">Found predominantly in the cytoplasm.</text>
</comment>
<comment type="subcellular location">
    <molecule>Isoform Gamma</molecule>
    <subcellularLocation>
        <location evidence="1">Nucleus</location>
    </subcellularLocation>
    <text evidence="1">Found predominantly in the nucleus.</text>
</comment>
<comment type="alternative products">
    <event type="alternative splicing"/>
    <isoform>
        <id>O08609-1</id>
        <name>Gamma</name>
        <sequence type="displayed"/>
    </isoform>
    <isoform>
        <id>O08609-2</id>
        <name>Alpha</name>
        <sequence type="described" ref="VSP_002139 VSP_002140"/>
    </isoform>
    <isoform>
        <id>O08609-3</id>
        <name>Beta</name>
        <sequence type="described" ref="VSP_002139"/>
    </isoform>
</comment>
<comment type="tissue specificity">
    <text evidence="7">Expressed in all tissues examined: stomach, duodenum, jejunum, ileum, colon, liver, pancreas, salivary gland, kidney, spleen, lung, heart, skeletal muscle, brain, ovary and testis.</text>
</comment>
<comment type="developmental stage">
    <text evidence="4">Expression peaks between dpc 9.5 to 11.5, then decreases during later stages of organogenesis.</text>
</comment>
<keyword id="KW-0010">Activator</keyword>
<keyword id="KW-0025">Alternative splicing</keyword>
<keyword id="KW-0963">Cytoplasm</keyword>
<keyword id="KW-0238">DNA-binding</keyword>
<keyword id="KW-0539">Nucleus</keyword>
<keyword id="KW-0597">Phosphoprotein</keyword>
<keyword id="KW-1185">Reference proteome</keyword>
<keyword id="KW-0678">Repressor</keyword>
<keyword id="KW-0804">Transcription</keyword>
<keyword id="KW-0805">Transcription regulation</keyword>
<name>MLX_MOUSE</name>
<proteinExistence type="evidence at protein level"/>
<gene>
    <name type="primary">Mlx</name>
    <name type="synonym">Tcfl4</name>
</gene>
<sequence>MTEPGASPEDPWVKASFADAHAGEGRAGRARARRGSGRRGAPQLSPESPLLSGARGCREDSSHPACAKVEYAYSDNSLDPGLFVESTHKGSVVSRANSIGSTSASSVPNTDDEDSDYQQEAYKESYKDRRRRAHTQAEQKRRDAIKRGYDDLQTIVPTCQQQDFSIGSQKLSKAIVLQKTIDYIQFLHKEKKKQEEEVSTLRKDVTALKIMKVNYEQIVKAHQDNPHEGEDQVSDQVKFNVFQGIMDSLFQSFNASISVASFQELSACVFSWIEEHCEPQTLREIVIGVLHQLKNQLY</sequence>
<dbReference type="EMBL" id="U43607">
    <property type="protein sequence ID" value="AAB51368.1"/>
    <property type="molecule type" value="mRNA"/>
</dbReference>
<dbReference type="EMBL" id="U43548">
    <property type="protein sequence ID" value="AAB51367.1"/>
    <property type="molecule type" value="mRNA"/>
</dbReference>
<dbReference type="EMBL" id="AF213670">
    <property type="protein sequence ID" value="AAG40149.1"/>
    <property type="molecule type" value="mRNA"/>
</dbReference>
<dbReference type="EMBL" id="AF213671">
    <property type="protein sequence ID" value="AAG40150.1"/>
    <property type="molecule type" value="mRNA"/>
</dbReference>
<dbReference type="EMBL" id="AF213672">
    <property type="protein sequence ID" value="AAG40151.1"/>
    <property type="molecule type" value="mRNA"/>
</dbReference>
<dbReference type="CCDS" id="CCDS25447.1">
    <molecule id="O08609-1"/>
</dbReference>
<dbReference type="CCDS" id="CCDS48935.1">
    <molecule id="O08609-3"/>
</dbReference>
<dbReference type="CCDS" id="CCDS48936.1">
    <molecule id="O08609-2"/>
</dbReference>
<dbReference type="RefSeq" id="NP_001152856.1">
    <property type="nucleotide sequence ID" value="NM_001159384.1"/>
</dbReference>
<dbReference type="RefSeq" id="NP_001152857.1">
    <property type="nucleotide sequence ID" value="NM_001159385.1"/>
</dbReference>
<dbReference type="RefSeq" id="NP_035680.3">
    <property type="nucleotide sequence ID" value="NM_011550.3"/>
</dbReference>
<dbReference type="SMR" id="O08609"/>
<dbReference type="BioGRID" id="204019">
    <property type="interactions" value="2"/>
</dbReference>
<dbReference type="CORUM" id="O08609"/>
<dbReference type="FunCoup" id="O08609">
    <property type="interactions" value="2164"/>
</dbReference>
<dbReference type="STRING" id="10090.ENSMUSP00000017945"/>
<dbReference type="iPTMnet" id="O08609"/>
<dbReference type="PhosphoSitePlus" id="O08609"/>
<dbReference type="SwissPalm" id="O08609"/>
<dbReference type="PaxDb" id="10090-ENSMUSP00000017945"/>
<dbReference type="ProteomicsDB" id="290261">
    <molecule id="O08609-1"/>
</dbReference>
<dbReference type="ProteomicsDB" id="290262">
    <molecule id="O08609-2"/>
</dbReference>
<dbReference type="ProteomicsDB" id="290263">
    <molecule id="O08609-3"/>
</dbReference>
<dbReference type="Pumba" id="O08609"/>
<dbReference type="DNASU" id="21428"/>
<dbReference type="GeneID" id="21428"/>
<dbReference type="KEGG" id="mmu:21428"/>
<dbReference type="AGR" id="MGI:108398"/>
<dbReference type="CTD" id="6945"/>
<dbReference type="MGI" id="MGI:108398">
    <property type="gene designation" value="Mlx"/>
</dbReference>
<dbReference type="eggNOG" id="KOG1319">
    <property type="taxonomic scope" value="Eukaryota"/>
</dbReference>
<dbReference type="InParanoid" id="O08609"/>
<dbReference type="OrthoDB" id="5778525at2759"/>
<dbReference type="PhylomeDB" id="O08609"/>
<dbReference type="BioGRID-ORCS" id="21428">
    <property type="hits" value="3 hits in 80 CRISPR screens"/>
</dbReference>
<dbReference type="ChiTaRS" id="Mlx">
    <property type="organism name" value="mouse"/>
</dbReference>
<dbReference type="PRO" id="PR:O08609"/>
<dbReference type="Proteomes" id="UP000000589">
    <property type="component" value="Unplaced"/>
</dbReference>
<dbReference type="RNAct" id="O08609">
    <property type="molecule type" value="protein"/>
</dbReference>
<dbReference type="GO" id="GO:0005737">
    <property type="term" value="C:cytoplasm"/>
    <property type="evidence" value="ECO:0000314"/>
    <property type="project" value="MGI"/>
</dbReference>
<dbReference type="GO" id="GO:0005654">
    <property type="term" value="C:nucleoplasm"/>
    <property type="evidence" value="ECO:0000304"/>
    <property type="project" value="Reactome"/>
</dbReference>
<dbReference type="GO" id="GO:0005634">
    <property type="term" value="C:nucleus"/>
    <property type="evidence" value="ECO:0000314"/>
    <property type="project" value="MGI"/>
</dbReference>
<dbReference type="GO" id="GO:0003677">
    <property type="term" value="F:DNA binding"/>
    <property type="evidence" value="ECO:0007669"/>
    <property type="project" value="UniProtKB-KW"/>
</dbReference>
<dbReference type="GO" id="GO:0046983">
    <property type="term" value="F:protein dimerization activity"/>
    <property type="evidence" value="ECO:0007669"/>
    <property type="project" value="InterPro"/>
</dbReference>
<dbReference type="GO" id="GO:0061629">
    <property type="term" value="F:RNA polymerase II-specific DNA-binding transcription factor binding"/>
    <property type="evidence" value="ECO:0000314"/>
    <property type="project" value="MGI"/>
</dbReference>
<dbReference type="GO" id="GO:0006913">
    <property type="term" value="P:nucleocytoplasmic transport"/>
    <property type="evidence" value="ECO:0000314"/>
    <property type="project" value="MGI"/>
</dbReference>
<dbReference type="GO" id="GO:0045821">
    <property type="term" value="P:positive regulation of glycolytic process"/>
    <property type="evidence" value="ECO:0000314"/>
    <property type="project" value="MGI"/>
</dbReference>
<dbReference type="GO" id="GO:0046889">
    <property type="term" value="P:positive regulation of lipid biosynthetic process"/>
    <property type="evidence" value="ECO:0000314"/>
    <property type="project" value="MGI"/>
</dbReference>
<dbReference type="GO" id="GO:0000432">
    <property type="term" value="P:positive regulation of transcription from RNA polymerase II promoter by glucose"/>
    <property type="evidence" value="ECO:0000314"/>
    <property type="project" value="MGI"/>
</dbReference>
<dbReference type="CDD" id="cd19687">
    <property type="entry name" value="bHLHzip_Mlx"/>
    <property type="match status" value="1"/>
</dbReference>
<dbReference type="FunFam" id="4.10.280.10:FF:000037">
    <property type="entry name" value="max-like protein X isoform X2"/>
    <property type="match status" value="1"/>
</dbReference>
<dbReference type="Gene3D" id="4.10.280.10">
    <property type="entry name" value="Helix-loop-helix DNA-binding domain"/>
    <property type="match status" value="1"/>
</dbReference>
<dbReference type="InterPro" id="IPR011598">
    <property type="entry name" value="bHLH_dom"/>
</dbReference>
<dbReference type="InterPro" id="IPR036638">
    <property type="entry name" value="HLH_DNA-bd_sf"/>
</dbReference>
<dbReference type="InterPro" id="IPR052207">
    <property type="entry name" value="Max-like/E-box_TFs"/>
</dbReference>
<dbReference type="PANTHER" id="PTHR15741">
    <property type="entry name" value="BASIC HELIX-LOOP-HELIX ZIP TRANSCRIPTION FACTOR"/>
    <property type="match status" value="1"/>
</dbReference>
<dbReference type="PANTHER" id="PTHR15741:SF25">
    <property type="entry name" value="MAX-LIKE PROTEIN X"/>
    <property type="match status" value="1"/>
</dbReference>
<dbReference type="Pfam" id="PF00010">
    <property type="entry name" value="HLH"/>
    <property type="match status" value="1"/>
</dbReference>
<dbReference type="SMART" id="SM00353">
    <property type="entry name" value="HLH"/>
    <property type="match status" value="1"/>
</dbReference>
<dbReference type="SUPFAM" id="SSF47459">
    <property type="entry name" value="HLH, helix-loop-helix DNA-binding domain"/>
    <property type="match status" value="1"/>
</dbReference>
<dbReference type="PROSITE" id="PS50888">
    <property type="entry name" value="BHLH"/>
    <property type="match status" value="1"/>
</dbReference>
<accession>O08609</accession>
<accession>Q9EQJ7</accession>
<accession>Q9EQJ8</accession>
<reference key="1">
    <citation type="journal article" date="1996" name="Gene">
        <title>TCFL4: a gene at 17q21.1 encoding a putative basic helix-loop-helix leucine-zipper transcription factor.</title>
        <authorList>
            <person name="Bjerknes M."/>
            <person name="Cheng H."/>
        </authorList>
    </citation>
    <scope>NUCLEOTIDE SEQUENCE [MRNA] (ISOFORM GAMMA)</scope>
    <scope>TISSUE SPECIFICITY</scope>
    <source>
        <strain>BALB/cJ</strain>
        <tissue>Intestine</tissue>
    </source>
</reference>
<reference key="2">
    <citation type="journal article" date="2000" name="Oncogene">
        <title>Mlx, a new Max-like bHLHZip family member: the center stage of a novel transcription factors regulatory pathway?</title>
        <authorList>
            <person name="Meroni G."/>
            <person name="Cairo S."/>
            <person name="Merla G."/>
            <person name="Messali S."/>
            <person name="Brent R."/>
            <person name="Ballabio A."/>
            <person name="Reymond A."/>
        </authorList>
    </citation>
    <scope>NUCLEOTIDE SEQUENCE [MRNA]</scope>
    <scope>ALTERNATIVE SPLICING</scope>
</reference>
<reference key="3">
    <citation type="journal article" date="1999" name="J. Biol. Chem.">
        <title>Mlx, a novel Max-like bHLHZip protein that interacts with the Max network of transcription factors.</title>
        <authorList>
            <person name="Billin A.N."/>
            <person name="Eilers A.L."/>
            <person name="Queva C."/>
            <person name="Ayer D.E."/>
        </authorList>
    </citation>
    <scope>FUNCTION</scope>
    <scope>DEVELOPMENTAL STAGE</scope>
    <source>
        <tissue>Embryonic stem cell</tissue>
    </source>
</reference>
<reference key="4">
    <citation type="journal article" date="2000" name="Mol. Cell. Biol.">
        <title>MondoA, a novel basic helix-loop-helix-leucine zipper transcriptional activator that constitutes a positive branch of a max-like network.</title>
        <authorList>
            <person name="Billin A.N."/>
            <person name="Eilers A.L."/>
            <person name="Coulter K.L."/>
            <person name="Logan J.S."/>
            <person name="Ayer D.E."/>
        </authorList>
    </citation>
    <scope>FUNCTION</scope>
    <scope>INTERACTION WITH MLXIP</scope>
</reference>
<reference key="5">
    <citation type="journal article" date="2006" name="Diabetes">
        <title>Glucose-dependent transcriptional regulation by an evolutionarily conserved glucose-sensing module.</title>
        <authorList>
            <person name="Li M.V."/>
            <person name="Chang B."/>
            <person name="Imamura M."/>
            <person name="Poungvarin N."/>
            <person name="Chan L."/>
        </authorList>
    </citation>
    <scope>FUNCTION</scope>
</reference>
<reference key="6">
    <citation type="journal article" date="2007" name="Proc. Natl. Acad. Sci. U.S.A.">
        <title>Large-scale phosphorylation analysis of mouse liver.</title>
        <authorList>
            <person name="Villen J."/>
            <person name="Beausoleil S.A."/>
            <person name="Gerber S.A."/>
            <person name="Gygi S.P."/>
        </authorList>
    </citation>
    <scope>PHOSPHORYLATION [LARGE SCALE ANALYSIS] AT SER-45 AND SER-48</scope>
    <scope>IDENTIFICATION BY MASS SPECTROMETRY [LARGE SCALE ANALYSIS]</scope>
    <source>
        <tissue>Liver</tissue>
    </source>
</reference>
<reference key="7">
    <citation type="journal article" date="2010" name="Cell">
        <title>A tissue-specific atlas of mouse protein phosphorylation and expression.</title>
        <authorList>
            <person name="Huttlin E.L."/>
            <person name="Jedrychowski M.P."/>
            <person name="Elias J.E."/>
            <person name="Goswami T."/>
            <person name="Rad R."/>
            <person name="Beausoleil S.A."/>
            <person name="Villen J."/>
            <person name="Haas W."/>
            <person name="Sowa M.E."/>
            <person name="Gygi S.P."/>
        </authorList>
    </citation>
    <scope>PHOSPHORYLATION [LARGE SCALE ANALYSIS] AT SER-45 AND SER-48</scope>
    <scope>IDENTIFICATION BY MASS SPECTROMETRY [LARGE SCALE ANALYSIS]</scope>
    <source>
        <tissue>Brown adipose tissue</tissue>
        <tissue>Heart</tissue>
        <tissue>Kidney</tissue>
        <tissue>Liver</tissue>
        <tissue>Pancreas</tissue>
        <tissue>Spleen</tissue>
        <tissue>Testis</tissue>
    </source>
</reference>
<protein>
    <recommendedName>
        <fullName>Max-like protein X</fullName>
    </recommendedName>
    <alternativeName>
        <fullName>Max-like bHLHZip protein</fullName>
    </alternativeName>
    <alternativeName>
        <fullName>Protein BigMax</fullName>
    </alternativeName>
    <alternativeName>
        <fullName>Transcription factor-like protein 4</fullName>
    </alternativeName>
</protein>